<protein>
    <recommendedName>
        <fullName evidence="4">Major capsid protein 1</fullName>
    </recommendedName>
    <alternativeName>
        <fullName evidence="4">MCP1</fullName>
    </alternativeName>
    <alternativeName>
        <fullName evidence="1">Major capsid protein VP1</fullName>
    </alternativeName>
</protein>
<evidence type="ECO:0000250" key="1">
    <source>
        <dbReference type="UniProtKB" id="A0A140F3K6"/>
    </source>
</evidence>
<evidence type="ECO:0000269" key="2">
    <source>
    </source>
</evidence>
<evidence type="ECO:0000269" key="3">
    <source>
    </source>
</evidence>
<evidence type="ECO:0000303" key="4">
    <source>
    </source>
</evidence>
<evidence type="ECO:0000305" key="5">
    <source>
    </source>
</evidence>
<evidence type="ECO:0000312" key="6">
    <source>
        <dbReference type="EMBL" id="QJF12393.1"/>
    </source>
</evidence>
<evidence type="ECO:0007744" key="7">
    <source>
        <dbReference type="PDB" id="6V7B"/>
    </source>
</evidence>
<evidence type="ECO:0007829" key="8">
    <source>
        <dbReference type="PDB" id="6V7B"/>
    </source>
</evidence>
<accession>A0A6M3VZT9</accession>
<name>CAPS1_PFV2</name>
<keyword id="KW-0002">3D-structure</keyword>
<keyword id="KW-1185">Reference proteome</keyword>
<keyword id="KW-0946">Virion</keyword>
<organism>
    <name type="scientific">Pyrobaculum filamentous virus 2</name>
    <name type="common">PFV2</name>
    <dbReference type="NCBI Taxonomy" id="2730621"/>
    <lineage>
        <taxon>Viruses</taxon>
        <taxon>Adnaviria</taxon>
        <taxon>Zilligvirae</taxon>
        <taxon>Taleaviricota</taxon>
        <taxon>Tokiviricetes</taxon>
        <taxon>Primavirales</taxon>
        <taxon>Tristromaviridae</taxon>
        <taxon>Alphatristromavirus</taxon>
        <taxon>Alphatristromavirus puteoliense</taxon>
    </lineage>
</organism>
<sequence length="129" mass="14964">MSVVTTRARIAETLTEKHTLGIEKVVATDSWRVGITSREKKLERINISAEISRRIQDEAIAYARNKGIPYLPGINGIAWKLLRLKWLGYTDQINVVMRTVPAEWRDFLTQIMENTQMESMYSELRKVRV</sequence>
<comment type="function">
    <text evidence="2 5">Self-assembles to form a helical, filamentous nucleocapsid mesuring 400 nm in length and 20 nm in width (Probable) (PubMed:32368353). Together with capsid protein 2, wraps arounds the DNA and maintains it in an A-form (Probable). Capsid proteins probably maintain the DNA in A-form by non-specific desolvation and specific coordination of the DNA phosphate groups by positively charged residues (Probable). This certainly protects the viral DNA under conditions such as the extreme desiccation of its host (Probable).</text>
</comment>
<comment type="subunit">
    <text evidence="3">Heterodimer composed of major capsid protein 1 and major capsid protein 2.</text>
</comment>
<comment type="subcellular location">
    <subcellularLocation>
        <location evidence="2">Virion</location>
    </subcellularLocation>
</comment>
<feature type="chain" id="PRO_0000453882" description="Major capsid protein 1">
    <location>
        <begin position="1"/>
        <end position="129"/>
    </location>
</feature>
<feature type="helix" evidence="8">
    <location>
        <begin position="14"/>
        <end position="28"/>
    </location>
</feature>
<feature type="helix" evidence="8">
    <location>
        <begin position="31"/>
        <end position="36"/>
    </location>
</feature>
<feature type="helix" evidence="8">
    <location>
        <begin position="41"/>
        <end position="43"/>
    </location>
</feature>
<feature type="helix" evidence="8">
    <location>
        <begin position="44"/>
        <end position="65"/>
    </location>
</feature>
<feature type="helix" evidence="8">
    <location>
        <begin position="74"/>
        <end position="87"/>
    </location>
</feature>
<feature type="helix" evidence="8">
    <location>
        <begin position="90"/>
        <end position="97"/>
    </location>
</feature>
<feature type="helix" evidence="8">
    <location>
        <begin position="102"/>
        <end position="104"/>
    </location>
</feature>
<feature type="helix" evidence="8">
    <location>
        <begin position="105"/>
        <end position="112"/>
    </location>
</feature>
<feature type="turn" evidence="8">
    <location>
        <begin position="113"/>
        <end position="117"/>
    </location>
</feature>
<feature type="helix" evidence="8">
    <location>
        <begin position="118"/>
        <end position="126"/>
    </location>
</feature>
<proteinExistence type="evidence at protein level"/>
<organismHost>
    <name type="scientific">Pyrobaculum arsenaticum</name>
    <dbReference type="NCBI Taxonomy" id="121277"/>
</organismHost>
<organismHost>
    <name type="scientific">Pyrobaculum oguniense</name>
    <dbReference type="NCBI Taxonomy" id="99007"/>
</organismHost>
<gene>
    <name evidence="6" type="ORF">PFV2_gp20</name>
</gene>
<dbReference type="EMBL" id="MN876844">
    <property type="protein sequence ID" value="QJF12393.1"/>
    <property type="molecule type" value="Genomic_DNA"/>
</dbReference>
<dbReference type="PDB" id="6V7B">
    <property type="method" value="EM"/>
    <property type="resolution" value="3.40 A"/>
    <property type="chains" value="A/B/C/D/E/F/G/H/I/J/K/L/M/N/O/P/Q/R/S/T/U/V/W=1-129"/>
</dbReference>
<dbReference type="PDBsum" id="6V7B"/>
<dbReference type="SMR" id="A0A6M3VZT9"/>
<dbReference type="Proteomes" id="UP000502572">
    <property type="component" value="Genome"/>
</dbReference>
<dbReference type="GO" id="GO:0019029">
    <property type="term" value="C:helical viral capsid"/>
    <property type="evidence" value="ECO:0000314"/>
    <property type="project" value="UniProtKB"/>
</dbReference>
<dbReference type="GO" id="GO:0003677">
    <property type="term" value="F:DNA binding"/>
    <property type="evidence" value="ECO:0000314"/>
    <property type="project" value="UniProtKB"/>
</dbReference>
<reference key="1">
    <citation type="journal article" date="2020" name="ISME J.">
        <title>New virus isolates from Italian hydrothermal environments underscore the biogeographic pattern in archaeal virus communities.</title>
        <authorList>
            <person name="Baquero D.P."/>
            <person name="Contursi P."/>
            <person name="Piochi M."/>
            <person name="Bartolucci S."/>
            <person name="Liu Y."/>
            <person name="Cvirkaite-Krupovic V."/>
            <person name="Prangishvili D."/>
            <person name="Krupovic M."/>
        </authorList>
    </citation>
    <scope>NUCLEOTIDE SEQUENCE [LARGE SCALE GENOMIC DNA]</scope>
    <source>
        <strain>4</strain>
    </source>
</reference>
<reference key="2">
    <citation type="journal article" date="2020" name="Proc. Natl. Acad. Sci. U.S.A.">
        <title>Structures of filamentous viruses infecting hyperthermophilic archaea explain DNA stabilization in extreme environments.</title>
        <authorList>
            <person name="Wang F."/>
            <person name="Baquero D.P."/>
            <person name="Beltran L.C."/>
            <person name="Su Z."/>
            <person name="Osinski T."/>
            <person name="Zheng W."/>
            <person name="Prangishvili D."/>
            <person name="Krupovic M."/>
            <person name="Egelman E.H."/>
        </authorList>
    </citation>
    <scope>SUBUNIT</scope>
    <scope>FUNCTION</scope>
</reference>
<reference evidence="7" key="3">
    <citation type="journal article" date="2020" name="Virus Evol.">
        <title>Structure of a filamentous virus uncovers familial ties within the archaeal virosphere.</title>
        <authorList>
            <person name="Wang F."/>
            <person name="Baquero D.P."/>
            <person name="Su Z."/>
            <person name="Osinski T."/>
            <person name="Prangishvili D."/>
            <person name="Egelman E.H."/>
            <person name="Krupovic M."/>
        </authorList>
    </citation>
    <scope>STRUCTURE BY ELECTRON MICROSCOPY (3.40 ANGSTROMS)</scope>
    <scope>SUBCELLULAR LOCATION</scope>
    <scope>FUNCTION</scope>
</reference>